<sequence>MTILTHTLGFPRVGLRRELKKAQESYWAGNSTREALLAVGRELRARHWEQQKQAGIDLLPVGDFAWYDHVLTTSLLLGNVSARHQNNDGSVDIDTLFRIGRGRAPTGEPAAAAEMTKWFNTNYHYIVPEFSKGQQFRLTWTQLLEEVDEALALGHKIKPVLLGPVTYLWLGKVKGEPFDRLTLLKDILPVYQHVLAELAKRGIEWVQIDEPALVLELPQAWLDAFKPAYDALAGQVKLLLTTYFEGVTPNLDTIIALPVQGLHVDLIHGKDDVAELHQRLPVDWLLSAGLINGRNVWRADLTEKYAQINALVGKRALWVASSCSLLHSPIDLSVETRLDTEVKSWFAFALQKCGELALLRDALNSGETAALEEWSAPIQARRHSRRVHNAAVEKRLAAITAQDSQRENPYEVRAEAQRARFKLPAWPTTTIGSFPQTTEIRGLRLDFKKGNLDANNYHTGIAEHIKQAIIEQERLGLDVLVHGEAERNDMVEYFGEHLDGFVFTQNGWVQSYGSRCVKPPVVIGDISRPAPITVEWAKYAQSLTDKPVKGMLTGPVTILCWSFPREDVTRETIAKQIALALRDEVADLEAAGIGIIQIDEPALREGLPLRRSDWDAYLEWGVEAFRINAAVAKDETQIHTHMCYCEFNDIMDSIAALDADVITIETSRSDMELLESFEAFDYPNEIGPGVYDIHSPNVPSVEWIEALLKKAAQRIPAQRLWVNPDCGLKTRGWPETRAALANMVKAAHNLRQAK</sequence>
<reference key="1">
    <citation type="journal article" date="2011" name="J. Bacteriol.">
        <title>Comparative genomics of 28 Salmonella enterica isolates: evidence for CRISPR-mediated adaptive sublineage evolution.</title>
        <authorList>
            <person name="Fricke W.F."/>
            <person name="Mammel M.K."/>
            <person name="McDermott P.F."/>
            <person name="Tartera C."/>
            <person name="White D.G."/>
            <person name="Leclerc J.E."/>
            <person name="Ravel J."/>
            <person name="Cebula T.A."/>
        </authorList>
    </citation>
    <scope>NUCLEOTIDE SEQUENCE [LARGE SCALE GENOMIC DNA]</scope>
    <source>
        <strain>SL254</strain>
    </source>
</reference>
<accession>B4SZ67</accession>
<gene>
    <name evidence="1" type="primary">metE</name>
    <name type="ordered locus">SNSL254_A4244</name>
</gene>
<name>METE_SALNS</name>
<organism>
    <name type="scientific">Salmonella newport (strain SL254)</name>
    <dbReference type="NCBI Taxonomy" id="423368"/>
    <lineage>
        <taxon>Bacteria</taxon>
        <taxon>Pseudomonadati</taxon>
        <taxon>Pseudomonadota</taxon>
        <taxon>Gammaproteobacteria</taxon>
        <taxon>Enterobacterales</taxon>
        <taxon>Enterobacteriaceae</taxon>
        <taxon>Salmonella</taxon>
    </lineage>
</organism>
<keyword id="KW-0028">Amino-acid biosynthesis</keyword>
<keyword id="KW-0479">Metal-binding</keyword>
<keyword id="KW-0486">Methionine biosynthesis</keyword>
<keyword id="KW-0489">Methyltransferase</keyword>
<keyword id="KW-0677">Repeat</keyword>
<keyword id="KW-0808">Transferase</keyword>
<keyword id="KW-0862">Zinc</keyword>
<evidence type="ECO:0000255" key="1">
    <source>
        <dbReference type="HAMAP-Rule" id="MF_00172"/>
    </source>
</evidence>
<protein>
    <recommendedName>
        <fullName evidence="1">5-methyltetrahydropteroyltriglutamate--homocysteine methyltransferase</fullName>
        <ecNumber evidence="1">2.1.1.14</ecNumber>
    </recommendedName>
    <alternativeName>
        <fullName evidence="1">Cobalamin-independent methionine synthase</fullName>
    </alternativeName>
    <alternativeName>
        <fullName evidence="1">Methionine synthase, vitamin-B12 independent isozyme</fullName>
    </alternativeName>
</protein>
<dbReference type="EC" id="2.1.1.14" evidence="1"/>
<dbReference type="EMBL" id="CP001113">
    <property type="protein sequence ID" value="ACF61376.1"/>
    <property type="molecule type" value="Genomic_DNA"/>
</dbReference>
<dbReference type="RefSeq" id="WP_000154189.1">
    <property type="nucleotide sequence ID" value="NZ_CCMR01000001.1"/>
</dbReference>
<dbReference type="SMR" id="B4SZ67"/>
<dbReference type="KEGG" id="see:SNSL254_A4244"/>
<dbReference type="HOGENOM" id="CLU_013175_0_0_6"/>
<dbReference type="UniPathway" id="UPA00051">
    <property type="reaction ID" value="UER00082"/>
</dbReference>
<dbReference type="Proteomes" id="UP000008824">
    <property type="component" value="Chromosome"/>
</dbReference>
<dbReference type="GO" id="GO:0003871">
    <property type="term" value="F:5-methyltetrahydropteroyltriglutamate-homocysteine S-methyltransferase activity"/>
    <property type="evidence" value="ECO:0007669"/>
    <property type="project" value="UniProtKB-UniRule"/>
</dbReference>
<dbReference type="GO" id="GO:0008270">
    <property type="term" value="F:zinc ion binding"/>
    <property type="evidence" value="ECO:0007669"/>
    <property type="project" value="InterPro"/>
</dbReference>
<dbReference type="GO" id="GO:0009086">
    <property type="term" value="P:methionine biosynthetic process"/>
    <property type="evidence" value="ECO:0007669"/>
    <property type="project" value="UniProtKB-UniRule"/>
</dbReference>
<dbReference type="GO" id="GO:0032259">
    <property type="term" value="P:methylation"/>
    <property type="evidence" value="ECO:0007669"/>
    <property type="project" value="UniProtKB-KW"/>
</dbReference>
<dbReference type="CDD" id="cd03311">
    <property type="entry name" value="CIMS_C_terminal_like"/>
    <property type="match status" value="1"/>
</dbReference>
<dbReference type="CDD" id="cd03312">
    <property type="entry name" value="CIMS_N_terminal_like"/>
    <property type="match status" value="1"/>
</dbReference>
<dbReference type="FunFam" id="3.20.20.210:FF:000002">
    <property type="entry name" value="5-methyltetrahydropteroyltriglutamate--homocysteine methyltransferase"/>
    <property type="match status" value="1"/>
</dbReference>
<dbReference type="FunFam" id="3.20.20.210:FF:000003">
    <property type="entry name" value="5-methyltetrahydropteroyltriglutamate--homocysteine methyltransferase"/>
    <property type="match status" value="1"/>
</dbReference>
<dbReference type="Gene3D" id="3.20.20.210">
    <property type="match status" value="2"/>
</dbReference>
<dbReference type="HAMAP" id="MF_00172">
    <property type="entry name" value="Meth_synth"/>
    <property type="match status" value="1"/>
</dbReference>
<dbReference type="InterPro" id="IPR013215">
    <property type="entry name" value="Cbl-indep_Met_Synth_N"/>
</dbReference>
<dbReference type="InterPro" id="IPR006276">
    <property type="entry name" value="Cobalamin-indep_Met_synthase"/>
</dbReference>
<dbReference type="InterPro" id="IPR002629">
    <property type="entry name" value="Met_Synth_C/arc"/>
</dbReference>
<dbReference type="InterPro" id="IPR038071">
    <property type="entry name" value="UROD/MetE-like_sf"/>
</dbReference>
<dbReference type="NCBIfam" id="TIGR01371">
    <property type="entry name" value="met_syn_B12ind"/>
    <property type="match status" value="1"/>
</dbReference>
<dbReference type="NCBIfam" id="NF003556">
    <property type="entry name" value="PRK05222.1"/>
    <property type="match status" value="1"/>
</dbReference>
<dbReference type="PANTHER" id="PTHR30519">
    <property type="entry name" value="5-METHYLTETRAHYDROPTEROYLTRIGLUTAMATE--HOMOCYSTEINE METHYLTRANSFERASE"/>
    <property type="match status" value="1"/>
</dbReference>
<dbReference type="Pfam" id="PF08267">
    <property type="entry name" value="Meth_synt_1"/>
    <property type="match status" value="1"/>
</dbReference>
<dbReference type="Pfam" id="PF01717">
    <property type="entry name" value="Meth_synt_2"/>
    <property type="match status" value="1"/>
</dbReference>
<dbReference type="PIRSF" id="PIRSF000382">
    <property type="entry name" value="MeTrfase_B12_ind"/>
    <property type="match status" value="1"/>
</dbReference>
<dbReference type="SUPFAM" id="SSF51726">
    <property type="entry name" value="UROD/MetE-like"/>
    <property type="match status" value="2"/>
</dbReference>
<proteinExistence type="inferred from homology"/>
<comment type="function">
    <text evidence="1">Catalyzes the transfer of a methyl group from 5-methyltetrahydrofolate to homocysteine resulting in methionine formation.</text>
</comment>
<comment type="catalytic activity">
    <reaction evidence="1">
        <text>5-methyltetrahydropteroyltri-L-glutamate + L-homocysteine = tetrahydropteroyltri-L-glutamate + L-methionine</text>
        <dbReference type="Rhea" id="RHEA:21196"/>
        <dbReference type="ChEBI" id="CHEBI:57844"/>
        <dbReference type="ChEBI" id="CHEBI:58140"/>
        <dbReference type="ChEBI" id="CHEBI:58199"/>
        <dbReference type="ChEBI" id="CHEBI:58207"/>
        <dbReference type="EC" id="2.1.1.14"/>
    </reaction>
</comment>
<comment type="cofactor">
    <cofactor evidence="1">
        <name>Zn(2+)</name>
        <dbReference type="ChEBI" id="CHEBI:29105"/>
    </cofactor>
    <text evidence="1">Binds 1 zinc ion per subunit.</text>
</comment>
<comment type="pathway">
    <text evidence="1">Amino-acid biosynthesis; L-methionine biosynthesis via de novo pathway; L-methionine from L-homocysteine (MetE route): step 1/1.</text>
</comment>
<comment type="similarity">
    <text evidence="1">Belongs to the vitamin-B12 independent methionine synthase family.</text>
</comment>
<feature type="chain" id="PRO_1000097842" description="5-methyltetrahydropteroyltriglutamate--homocysteine methyltransferase">
    <location>
        <begin position="1"/>
        <end position="754"/>
    </location>
</feature>
<feature type="active site" description="Proton donor" evidence="1">
    <location>
        <position position="694"/>
    </location>
</feature>
<feature type="binding site" evidence="1">
    <location>
        <begin position="17"/>
        <end position="20"/>
    </location>
    <ligand>
        <name>5-methyltetrahydropteroyltri-L-glutamate</name>
        <dbReference type="ChEBI" id="CHEBI:58207"/>
    </ligand>
</feature>
<feature type="binding site" evidence="1">
    <location>
        <position position="117"/>
    </location>
    <ligand>
        <name>5-methyltetrahydropteroyltri-L-glutamate</name>
        <dbReference type="ChEBI" id="CHEBI:58207"/>
    </ligand>
</feature>
<feature type="binding site" evidence="1">
    <location>
        <begin position="431"/>
        <end position="433"/>
    </location>
    <ligand>
        <name>L-homocysteine</name>
        <dbReference type="ChEBI" id="CHEBI:58199"/>
    </ligand>
</feature>
<feature type="binding site" evidence="1">
    <location>
        <begin position="431"/>
        <end position="433"/>
    </location>
    <ligand>
        <name>L-methionine</name>
        <dbReference type="ChEBI" id="CHEBI:57844"/>
    </ligand>
</feature>
<feature type="binding site" evidence="1">
    <location>
        <position position="484"/>
    </location>
    <ligand>
        <name>L-homocysteine</name>
        <dbReference type="ChEBI" id="CHEBI:58199"/>
    </ligand>
</feature>
<feature type="binding site" evidence="1">
    <location>
        <position position="484"/>
    </location>
    <ligand>
        <name>L-methionine</name>
        <dbReference type="ChEBI" id="CHEBI:57844"/>
    </ligand>
</feature>
<feature type="binding site" evidence="1">
    <location>
        <begin position="515"/>
        <end position="516"/>
    </location>
    <ligand>
        <name>5-methyltetrahydropteroyltri-L-glutamate</name>
        <dbReference type="ChEBI" id="CHEBI:58207"/>
    </ligand>
</feature>
<feature type="binding site" evidence="1">
    <location>
        <position position="561"/>
    </location>
    <ligand>
        <name>5-methyltetrahydropteroyltri-L-glutamate</name>
        <dbReference type="ChEBI" id="CHEBI:58207"/>
    </ligand>
</feature>
<feature type="binding site" evidence="1">
    <location>
        <position position="599"/>
    </location>
    <ligand>
        <name>L-homocysteine</name>
        <dbReference type="ChEBI" id="CHEBI:58199"/>
    </ligand>
</feature>
<feature type="binding site" evidence="1">
    <location>
        <position position="599"/>
    </location>
    <ligand>
        <name>L-methionine</name>
        <dbReference type="ChEBI" id="CHEBI:57844"/>
    </ligand>
</feature>
<feature type="binding site" evidence="1">
    <location>
        <position position="605"/>
    </location>
    <ligand>
        <name>5-methyltetrahydropteroyltri-L-glutamate</name>
        <dbReference type="ChEBI" id="CHEBI:58207"/>
    </ligand>
</feature>
<feature type="binding site" evidence="1">
    <location>
        <position position="641"/>
    </location>
    <ligand>
        <name>Zn(2+)</name>
        <dbReference type="ChEBI" id="CHEBI:29105"/>
        <note>catalytic</note>
    </ligand>
</feature>
<feature type="binding site" evidence="1">
    <location>
        <position position="643"/>
    </location>
    <ligand>
        <name>Zn(2+)</name>
        <dbReference type="ChEBI" id="CHEBI:29105"/>
        <note>catalytic</note>
    </ligand>
</feature>
<feature type="binding site" evidence="1">
    <location>
        <position position="665"/>
    </location>
    <ligand>
        <name>Zn(2+)</name>
        <dbReference type="ChEBI" id="CHEBI:29105"/>
        <note>catalytic</note>
    </ligand>
</feature>
<feature type="binding site" evidence="1">
    <location>
        <position position="726"/>
    </location>
    <ligand>
        <name>Zn(2+)</name>
        <dbReference type="ChEBI" id="CHEBI:29105"/>
        <note>catalytic</note>
    </ligand>
</feature>